<evidence type="ECO:0000255" key="1">
    <source>
        <dbReference type="HAMAP-Rule" id="MF_01853"/>
    </source>
</evidence>
<dbReference type="EC" id="3.1.-.-" evidence="1"/>
<dbReference type="EMBL" id="CP001338">
    <property type="protein sequence ID" value="ACL16878.1"/>
    <property type="molecule type" value="Genomic_DNA"/>
</dbReference>
<dbReference type="RefSeq" id="WP_012618197.1">
    <property type="nucleotide sequence ID" value="NC_011832.1"/>
</dbReference>
<dbReference type="SMR" id="B8GIR5"/>
<dbReference type="STRING" id="521011.Mpal_1565"/>
<dbReference type="GeneID" id="7271110"/>
<dbReference type="KEGG" id="mpl:Mpal_1565"/>
<dbReference type="eggNOG" id="arCOG01741">
    <property type="taxonomic scope" value="Archaea"/>
</dbReference>
<dbReference type="HOGENOM" id="CLU_023334_0_0_2"/>
<dbReference type="OrthoDB" id="31300at2157"/>
<dbReference type="Proteomes" id="UP000002457">
    <property type="component" value="Chromosome"/>
</dbReference>
<dbReference type="GO" id="GO:0005737">
    <property type="term" value="C:cytoplasm"/>
    <property type="evidence" value="ECO:0007669"/>
    <property type="project" value="UniProtKB-SubCell"/>
</dbReference>
<dbReference type="GO" id="GO:0004519">
    <property type="term" value="F:endonuclease activity"/>
    <property type="evidence" value="ECO:0007669"/>
    <property type="project" value="UniProtKB-UniRule"/>
</dbReference>
<dbReference type="GO" id="GO:0046872">
    <property type="term" value="F:metal ion binding"/>
    <property type="evidence" value="ECO:0007669"/>
    <property type="project" value="UniProtKB-UniRule"/>
</dbReference>
<dbReference type="GO" id="GO:0070651">
    <property type="term" value="P:nonfunctional rRNA decay"/>
    <property type="evidence" value="ECO:0007669"/>
    <property type="project" value="TreeGrafter"/>
</dbReference>
<dbReference type="GO" id="GO:0070966">
    <property type="term" value="P:nuclear-transcribed mRNA catabolic process, no-go decay"/>
    <property type="evidence" value="ECO:0007669"/>
    <property type="project" value="InterPro"/>
</dbReference>
<dbReference type="GO" id="GO:0070481">
    <property type="term" value="P:nuclear-transcribed mRNA catabolic process, non-stop decay"/>
    <property type="evidence" value="ECO:0007669"/>
    <property type="project" value="InterPro"/>
</dbReference>
<dbReference type="GO" id="GO:0032790">
    <property type="term" value="P:ribosome disassembly"/>
    <property type="evidence" value="ECO:0007669"/>
    <property type="project" value="TreeGrafter"/>
</dbReference>
<dbReference type="GO" id="GO:0071025">
    <property type="term" value="P:RNA surveillance"/>
    <property type="evidence" value="ECO:0007669"/>
    <property type="project" value="InterPro"/>
</dbReference>
<dbReference type="Gene3D" id="3.30.1330.30">
    <property type="match status" value="1"/>
</dbReference>
<dbReference type="Gene3D" id="3.30.420.60">
    <property type="entry name" value="eRF1 domain 2"/>
    <property type="match status" value="1"/>
</dbReference>
<dbReference type="Gene3D" id="2.30.30.870">
    <property type="entry name" value="Pelota, domain A"/>
    <property type="match status" value="1"/>
</dbReference>
<dbReference type="HAMAP" id="MF_01853">
    <property type="entry name" value="PelO"/>
    <property type="match status" value="1"/>
</dbReference>
<dbReference type="InterPro" id="IPR042226">
    <property type="entry name" value="eFR1_2_sf"/>
</dbReference>
<dbReference type="InterPro" id="IPR005140">
    <property type="entry name" value="eRF1_1_Pelota"/>
</dbReference>
<dbReference type="InterPro" id="IPR005142">
    <property type="entry name" value="eRF1_3"/>
</dbReference>
<dbReference type="InterPro" id="IPR038069">
    <property type="entry name" value="Pelota/DOM34_N"/>
</dbReference>
<dbReference type="InterPro" id="IPR023521">
    <property type="entry name" value="Pelota_arc"/>
</dbReference>
<dbReference type="InterPro" id="IPR029064">
    <property type="entry name" value="Ribosomal_eL30-like_sf"/>
</dbReference>
<dbReference type="InterPro" id="IPR004405">
    <property type="entry name" value="Transl-rel_pelota"/>
</dbReference>
<dbReference type="NCBIfam" id="TIGR00111">
    <property type="entry name" value="pelota"/>
    <property type="match status" value="1"/>
</dbReference>
<dbReference type="PANTHER" id="PTHR10853">
    <property type="entry name" value="PELOTA"/>
    <property type="match status" value="1"/>
</dbReference>
<dbReference type="PANTHER" id="PTHR10853:SF0">
    <property type="entry name" value="PROTEIN PELOTA HOMOLOG"/>
    <property type="match status" value="1"/>
</dbReference>
<dbReference type="Pfam" id="PF03463">
    <property type="entry name" value="eRF1_1"/>
    <property type="match status" value="1"/>
</dbReference>
<dbReference type="Pfam" id="PF03465">
    <property type="entry name" value="eRF1_3"/>
    <property type="match status" value="1"/>
</dbReference>
<dbReference type="SMART" id="SM01194">
    <property type="entry name" value="eRF1_1"/>
    <property type="match status" value="1"/>
</dbReference>
<dbReference type="SUPFAM" id="SSF159065">
    <property type="entry name" value="Dom34/Pelota N-terminal domain-like"/>
    <property type="match status" value="1"/>
</dbReference>
<dbReference type="SUPFAM" id="SSF55315">
    <property type="entry name" value="L30e-like"/>
    <property type="match status" value="1"/>
</dbReference>
<dbReference type="SUPFAM" id="SSF53137">
    <property type="entry name" value="Translational machinery components"/>
    <property type="match status" value="1"/>
</dbReference>
<organism>
    <name type="scientific">Methanosphaerula palustris (strain ATCC BAA-1556 / DSM 19958 / E1-9c)</name>
    <dbReference type="NCBI Taxonomy" id="521011"/>
    <lineage>
        <taxon>Archaea</taxon>
        <taxon>Methanobacteriati</taxon>
        <taxon>Methanobacteriota</taxon>
        <taxon>Stenosarchaea group</taxon>
        <taxon>Methanomicrobia</taxon>
        <taxon>Methanomicrobiales</taxon>
        <taxon>Methanoregulaceae</taxon>
        <taxon>Methanosphaerula</taxon>
    </lineage>
</organism>
<feature type="chain" id="PRO_1000188679" description="Protein pelota homolog">
    <location>
        <begin position="1"/>
        <end position="340"/>
    </location>
</feature>
<name>PELO_METPE</name>
<sequence>MKADVQEIRQGYGEIRLFPESVDDIWHLSHLIAPGDLVFAQTFRSVETATDKLRPEKAEKRPVRIGIRVEKVEFHQYSSRLRVTGLIESGPDVGSYHTLNLEPNFEVSVIRFWSKSDRERVDRAVNSSGSGLVHVLAIEEGEAELFRIRQYGPEQVLTITMGSGKGAPVDSREGFFIEAATPLLQITGPVIIAGPGFIKDDFARFLKNRYPAIAANSMVVETRRIGRGAVQEVIGQGVIGKIAGDLQLGREVQVMDEVLKRIAMEGLITYGRAEVGQAISFGAADQVIVSDRLIRDPEVARLMEQAEQMNATVTVLSSCFEPGERLWALGGIAALLRYAL</sequence>
<keyword id="KW-0963">Cytoplasm</keyword>
<keyword id="KW-0255">Endonuclease</keyword>
<keyword id="KW-0378">Hydrolase</keyword>
<keyword id="KW-0479">Metal-binding</keyword>
<keyword id="KW-0540">Nuclease</keyword>
<keyword id="KW-1185">Reference proteome</keyword>
<protein>
    <recommendedName>
        <fullName evidence="1">Protein pelota homolog</fullName>
        <ecNumber evidence="1">3.1.-.-</ecNumber>
    </recommendedName>
</protein>
<proteinExistence type="inferred from homology"/>
<comment type="function">
    <text evidence="1">May function in recognizing stalled ribosomes, interact with stem-loop structures in stalled mRNA molecules, and effect endonucleolytic cleavage of the mRNA. May play a role in the release non-functional ribosomes and degradation of damaged mRNAs. Has endoribonuclease activity.</text>
</comment>
<comment type="cofactor">
    <cofactor evidence="1">
        <name>a divalent metal cation</name>
        <dbReference type="ChEBI" id="CHEBI:60240"/>
    </cofactor>
</comment>
<comment type="subunit">
    <text evidence="1">Monomer.</text>
</comment>
<comment type="subcellular location">
    <subcellularLocation>
        <location evidence="1">Cytoplasm</location>
    </subcellularLocation>
</comment>
<comment type="domain">
    <text evidence="1">The N-terminal domain has the RNA-binding Sm fold. It harbors the endoribonuclease activity.</text>
</comment>
<comment type="similarity">
    <text evidence="1">Belongs to the eukaryotic release factor 1 family. Pelota subfamily.</text>
</comment>
<accession>B8GIR5</accession>
<reference key="1">
    <citation type="journal article" date="2015" name="Genome Announc.">
        <title>Complete Genome Sequence of Methanosphaerula palustris E1-9CT, a Hydrogenotrophic Methanogen Isolated from a Minerotrophic Fen Peatland.</title>
        <authorList>
            <person name="Cadillo-Quiroz H."/>
            <person name="Browne P."/>
            <person name="Kyrpides N."/>
            <person name="Woyke T."/>
            <person name="Goodwin L."/>
            <person name="Detter C."/>
            <person name="Yavitt J.B."/>
            <person name="Zinder S.H."/>
        </authorList>
    </citation>
    <scope>NUCLEOTIDE SEQUENCE [LARGE SCALE GENOMIC DNA]</scope>
    <source>
        <strain>ATCC BAA-1556 / DSM 19958 / E1-9c</strain>
    </source>
</reference>
<gene>
    <name evidence="1" type="primary">pelA</name>
    <name type="ordered locus">Mpal_1565</name>
</gene>